<keyword id="KW-0067">ATP-binding</keyword>
<keyword id="KW-0418">Kinase</keyword>
<keyword id="KW-0441">Lipid A biosynthesis</keyword>
<keyword id="KW-0444">Lipid biosynthesis</keyword>
<keyword id="KW-0443">Lipid metabolism</keyword>
<keyword id="KW-0547">Nucleotide-binding</keyword>
<keyword id="KW-0808">Transferase</keyword>
<comment type="function">
    <text evidence="1">Transfers the gamma-phosphate of ATP to the 4'-position of a tetraacyldisaccharide 1-phosphate intermediate (termed DS-1-P) to form tetraacyldisaccharide 1,4'-bis-phosphate (lipid IVA).</text>
</comment>
<comment type="catalytic activity">
    <reaction evidence="1">
        <text>a lipid A disaccharide + ATP = a lipid IVA + ADP + H(+)</text>
        <dbReference type="Rhea" id="RHEA:67840"/>
        <dbReference type="ChEBI" id="CHEBI:15378"/>
        <dbReference type="ChEBI" id="CHEBI:30616"/>
        <dbReference type="ChEBI" id="CHEBI:176343"/>
        <dbReference type="ChEBI" id="CHEBI:176425"/>
        <dbReference type="ChEBI" id="CHEBI:456216"/>
        <dbReference type="EC" id="2.7.1.130"/>
    </reaction>
</comment>
<comment type="pathway">
    <text evidence="1">Glycolipid biosynthesis; lipid IV(A) biosynthesis; lipid IV(A) from (3R)-3-hydroxytetradecanoyl-[acyl-carrier-protein] and UDP-N-acetyl-alpha-D-glucosamine: step 6/6.</text>
</comment>
<comment type="similarity">
    <text evidence="1">Belongs to the LpxK family.</text>
</comment>
<gene>
    <name evidence="1" type="primary">lpxK</name>
    <name type="ordered locus">PputGB1_1476</name>
</gene>
<accession>B0KF41</accession>
<reference key="1">
    <citation type="submission" date="2008-01" db="EMBL/GenBank/DDBJ databases">
        <title>Complete sequence of Pseudomonas putida GB-1.</title>
        <authorList>
            <consortium name="US DOE Joint Genome Institute"/>
            <person name="Copeland A."/>
            <person name="Lucas S."/>
            <person name="Lapidus A."/>
            <person name="Barry K."/>
            <person name="Glavina del Rio T."/>
            <person name="Dalin E."/>
            <person name="Tice H."/>
            <person name="Pitluck S."/>
            <person name="Bruce D."/>
            <person name="Goodwin L."/>
            <person name="Chertkov O."/>
            <person name="Brettin T."/>
            <person name="Detter J.C."/>
            <person name="Han C."/>
            <person name="Kuske C.R."/>
            <person name="Schmutz J."/>
            <person name="Larimer F."/>
            <person name="Land M."/>
            <person name="Hauser L."/>
            <person name="Kyrpides N."/>
            <person name="Kim E."/>
            <person name="McCarthy J.K."/>
            <person name="Richardson P."/>
        </authorList>
    </citation>
    <scope>NUCLEOTIDE SEQUENCE [LARGE SCALE GENOMIC DNA]</scope>
    <source>
        <strain>GB-1</strain>
    </source>
</reference>
<proteinExistence type="inferred from homology"/>
<feature type="chain" id="PRO_0000340851" description="Tetraacyldisaccharide 4'-kinase">
    <location>
        <begin position="1"/>
        <end position="333"/>
    </location>
</feature>
<feature type="binding site" evidence="1">
    <location>
        <begin position="60"/>
        <end position="67"/>
    </location>
    <ligand>
        <name>ATP</name>
        <dbReference type="ChEBI" id="CHEBI:30616"/>
    </ligand>
</feature>
<organism>
    <name type="scientific">Pseudomonas putida (strain GB-1)</name>
    <dbReference type="NCBI Taxonomy" id="76869"/>
    <lineage>
        <taxon>Bacteria</taxon>
        <taxon>Pseudomonadati</taxon>
        <taxon>Pseudomonadota</taxon>
        <taxon>Gammaproteobacteria</taxon>
        <taxon>Pseudomonadales</taxon>
        <taxon>Pseudomonadaceae</taxon>
        <taxon>Pseudomonas</taxon>
    </lineage>
</organism>
<sequence>MAFADRLLAAWYAGHPALALLRPLEALYRRVVTRKRARFLSGESASYRAPVPVIVVGNITVGGTGKTPMILWLIEHCRQLGLKVGVVSRGYGAKPPQLPWRVQANQCADQAGDEPLLIVQRTGVPLMIDPDRSRAVQALLASEPLDLILCDDGMQHYRLARDLELVLIDAARGLGNGRCLPAGPLREPAERLLDADAVLFNGANADRADGFGFCLQPSALVNLRSGERRALDHFPAGQRLHAVAGIGNPQRFFNTLLGLNWQPVPHPFADHAQFSAQSLAFSPQLPLVMTEKDAVKCRAFAADDWWYLAVEAQPTPAFSAWFDNQLQRLLRKP</sequence>
<name>LPXK_PSEPG</name>
<protein>
    <recommendedName>
        <fullName evidence="1">Tetraacyldisaccharide 4'-kinase</fullName>
        <ecNumber evidence="1">2.7.1.130</ecNumber>
    </recommendedName>
    <alternativeName>
        <fullName evidence="1">Lipid A 4'-kinase</fullName>
    </alternativeName>
</protein>
<evidence type="ECO:0000255" key="1">
    <source>
        <dbReference type="HAMAP-Rule" id="MF_00409"/>
    </source>
</evidence>
<dbReference type="EC" id="2.7.1.130" evidence="1"/>
<dbReference type="EMBL" id="CP000926">
    <property type="protein sequence ID" value="ABY97381.1"/>
    <property type="molecule type" value="Genomic_DNA"/>
</dbReference>
<dbReference type="RefSeq" id="WP_012271150.1">
    <property type="nucleotide sequence ID" value="NC_010322.1"/>
</dbReference>
<dbReference type="SMR" id="B0KF41"/>
<dbReference type="KEGG" id="ppg:PputGB1_1476"/>
<dbReference type="eggNOG" id="COG1663">
    <property type="taxonomic scope" value="Bacteria"/>
</dbReference>
<dbReference type="HOGENOM" id="CLU_038816_2_0_6"/>
<dbReference type="UniPathway" id="UPA00359">
    <property type="reaction ID" value="UER00482"/>
</dbReference>
<dbReference type="Proteomes" id="UP000002157">
    <property type="component" value="Chromosome"/>
</dbReference>
<dbReference type="GO" id="GO:0005886">
    <property type="term" value="C:plasma membrane"/>
    <property type="evidence" value="ECO:0007669"/>
    <property type="project" value="TreeGrafter"/>
</dbReference>
<dbReference type="GO" id="GO:0005524">
    <property type="term" value="F:ATP binding"/>
    <property type="evidence" value="ECO:0007669"/>
    <property type="project" value="UniProtKB-UniRule"/>
</dbReference>
<dbReference type="GO" id="GO:0009029">
    <property type="term" value="F:tetraacyldisaccharide 4'-kinase activity"/>
    <property type="evidence" value="ECO:0007669"/>
    <property type="project" value="UniProtKB-UniRule"/>
</dbReference>
<dbReference type="GO" id="GO:0009245">
    <property type="term" value="P:lipid A biosynthetic process"/>
    <property type="evidence" value="ECO:0007669"/>
    <property type="project" value="UniProtKB-UniRule"/>
</dbReference>
<dbReference type="GO" id="GO:0009244">
    <property type="term" value="P:lipopolysaccharide core region biosynthetic process"/>
    <property type="evidence" value="ECO:0007669"/>
    <property type="project" value="TreeGrafter"/>
</dbReference>
<dbReference type="HAMAP" id="MF_00409">
    <property type="entry name" value="LpxK"/>
    <property type="match status" value="1"/>
</dbReference>
<dbReference type="InterPro" id="IPR003758">
    <property type="entry name" value="LpxK"/>
</dbReference>
<dbReference type="InterPro" id="IPR027417">
    <property type="entry name" value="P-loop_NTPase"/>
</dbReference>
<dbReference type="NCBIfam" id="TIGR00682">
    <property type="entry name" value="lpxK"/>
    <property type="match status" value="1"/>
</dbReference>
<dbReference type="PANTHER" id="PTHR42724">
    <property type="entry name" value="TETRAACYLDISACCHARIDE 4'-KINASE"/>
    <property type="match status" value="1"/>
</dbReference>
<dbReference type="PANTHER" id="PTHR42724:SF1">
    <property type="entry name" value="TETRAACYLDISACCHARIDE 4'-KINASE, MITOCHONDRIAL-RELATED"/>
    <property type="match status" value="1"/>
</dbReference>
<dbReference type="Pfam" id="PF02606">
    <property type="entry name" value="LpxK"/>
    <property type="match status" value="1"/>
</dbReference>
<dbReference type="SUPFAM" id="SSF52540">
    <property type="entry name" value="P-loop containing nucleoside triphosphate hydrolases"/>
    <property type="match status" value="1"/>
</dbReference>